<accession>Q2YYJ5</accession>
<sequence length="310" mass="33733">MILTLTLNPSVDISYPLTALKLDDVNRVQEVSKTAGGKGLNVTRVLAQVGEPVLASGFIGGELGQFIAKKLDLAGIKHAFYNIKGETRNCIAILHEGQQTEILEQGPEIDNQEAAGFIKHFEQLLEKVEAVAISGSLPKGLNQDYYAQIIERCQNKGVPVILDCSGATLQTVLENPYKPTVIKPNISELYQLLNQPLDESLESLKQAVSQPLFEGVEWIIVSLGAQGAFAKHNHTFYRVNIPTISVLNPVGSGDSTVAGITSAILNHENDLDLLKKANTLGMLNAQEAQTGYVNLNNYDDLFNQIEVLEV</sequence>
<keyword id="KW-0067">ATP-binding</keyword>
<keyword id="KW-0418">Kinase</keyword>
<keyword id="KW-0423">Lactose metabolism</keyword>
<keyword id="KW-0547">Nucleotide-binding</keyword>
<keyword id="KW-0808">Transferase</keyword>
<reference key="1">
    <citation type="journal article" date="2007" name="PLoS ONE">
        <title>Molecular correlates of host specialization in Staphylococcus aureus.</title>
        <authorList>
            <person name="Herron-Olson L."/>
            <person name="Fitzgerald J.R."/>
            <person name="Musser J.M."/>
            <person name="Kapur V."/>
        </authorList>
    </citation>
    <scope>NUCLEOTIDE SEQUENCE [LARGE SCALE GENOMIC DNA]</scope>
    <source>
        <strain>bovine RF122 / ET3-1</strain>
    </source>
</reference>
<protein>
    <recommendedName>
        <fullName evidence="1">Tagatose-6-phosphate kinase</fullName>
        <ecNumber evidence="1">2.7.1.144</ecNumber>
    </recommendedName>
    <alternativeName>
        <fullName evidence="1">Phosphotagatokinase</fullName>
    </alternativeName>
</protein>
<name>LACC_STAAB</name>
<proteinExistence type="inferred from homology"/>
<comment type="catalytic activity">
    <reaction evidence="1">
        <text>D-tagatofuranose 6-phosphate + ATP = D-tagatofuranose 1,6-bisphosphate + ADP + H(+)</text>
        <dbReference type="Rhea" id="RHEA:12420"/>
        <dbReference type="ChEBI" id="CHEBI:15378"/>
        <dbReference type="ChEBI" id="CHEBI:30616"/>
        <dbReference type="ChEBI" id="CHEBI:58694"/>
        <dbReference type="ChEBI" id="CHEBI:58695"/>
        <dbReference type="ChEBI" id="CHEBI:456216"/>
        <dbReference type="EC" id="2.7.1.144"/>
    </reaction>
</comment>
<comment type="pathway">
    <text evidence="1">Carbohydrate metabolism; D-tagatose 6-phosphate degradation; D-glyceraldehyde 3-phosphate and glycerone phosphate from D-tagatose 6-phosphate: step 1/2.</text>
</comment>
<comment type="similarity">
    <text evidence="1">Belongs to the carbohydrate kinase PfkB family. LacC subfamily.</text>
</comment>
<organism>
    <name type="scientific">Staphylococcus aureus (strain bovine RF122 / ET3-1)</name>
    <dbReference type="NCBI Taxonomy" id="273036"/>
    <lineage>
        <taxon>Bacteria</taxon>
        <taxon>Bacillati</taxon>
        <taxon>Bacillota</taxon>
        <taxon>Bacilli</taxon>
        <taxon>Bacillales</taxon>
        <taxon>Staphylococcaceae</taxon>
        <taxon>Staphylococcus</taxon>
    </lineage>
</organism>
<feature type="chain" id="PRO_1000068937" description="Tagatose-6-phosphate kinase">
    <location>
        <begin position="1"/>
        <end position="310"/>
    </location>
</feature>
<gene>
    <name evidence="1" type="primary">lacC</name>
    <name type="ordered locus">SAB2074c</name>
</gene>
<evidence type="ECO:0000255" key="1">
    <source>
        <dbReference type="HAMAP-Rule" id="MF_01557"/>
    </source>
</evidence>
<dbReference type="EC" id="2.7.1.144" evidence="1"/>
<dbReference type="EMBL" id="AJ938182">
    <property type="protein sequence ID" value="CAI81763.1"/>
    <property type="molecule type" value="Genomic_DNA"/>
</dbReference>
<dbReference type="RefSeq" id="WP_000604148.1">
    <property type="nucleotide sequence ID" value="NC_007622.1"/>
</dbReference>
<dbReference type="SMR" id="Q2YYJ5"/>
<dbReference type="KEGG" id="sab:SAB2074c"/>
<dbReference type="HOGENOM" id="CLU_050013_5_0_9"/>
<dbReference type="UniPathway" id="UPA00704">
    <property type="reaction ID" value="UER00715"/>
</dbReference>
<dbReference type="GO" id="GO:0005829">
    <property type="term" value="C:cytosol"/>
    <property type="evidence" value="ECO:0007669"/>
    <property type="project" value="TreeGrafter"/>
</dbReference>
<dbReference type="GO" id="GO:0005524">
    <property type="term" value="F:ATP binding"/>
    <property type="evidence" value="ECO:0007669"/>
    <property type="project" value="UniProtKB-KW"/>
</dbReference>
<dbReference type="GO" id="GO:0008443">
    <property type="term" value="F:phosphofructokinase activity"/>
    <property type="evidence" value="ECO:0007669"/>
    <property type="project" value="TreeGrafter"/>
</dbReference>
<dbReference type="GO" id="GO:0009024">
    <property type="term" value="F:tagatose-6-phosphate kinase activity"/>
    <property type="evidence" value="ECO:0007669"/>
    <property type="project" value="UniProtKB-UniRule"/>
</dbReference>
<dbReference type="GO" id="GO:2001059">
    <property type="term" value="P:D-tagatose 6-phosphate catabolic process"/>
    <property type="evidence" value="ECO:0007669"/>
    <property type="project" value="UniProtKB-UniRule"/>
</dbReference>
<dbReference type="GO" id="GO:0019512">
    <property type="term" value="P:lactose catabolic process via tagatose-6-phosphate"/>
    <property type="evidence" value="ECO:0007669"/>
    <property type="project" value="InterPro"/>
</dbReference>
<dbReference type="CDD" id="cd01164">
    <property type="entry name" value="FruK_PfkB_like"/>
    <property type="match status" value="1"/>
</dbReference>
<dbReference type="FunFam" id="3.40.1190.20:FF:000001">
    <property type="entry name" value="Phosphofructokinase"/>
    <property type="match status" value="1"/>
</dbReference>
<dbReference type="Gene3D" id="3.40.1190.20">
    <property type="match status" value="1"/>
</dbReference>
<dbReference type="HAMAP" id="MF_01557">
    <property type="entry name" value="LacC"/>
    <property type="match status" value="1"/>
</dbReference>
<dbReference type="InterPro" id="IPR002173">
    <property type="entry name" value="Carboh/pur_kinase_PfkB_CS"/>
</dbReference>
<dbReference type="InterPro" id="IPR005926">
    <property type="entry name" value="LacC"/>
</dbReference>
<dbReference type="InterPro" id="IPR011611">
    <property type="entry name" value="PfkB_dom"/>
</dbReference>
<dbReference type="InterPro" id="IPR029056">
    <property type="entry name" value="Ribokinase-like"/>
</dbReference>
<dbReference type="InterPro" id="IPR017583">
    <property type="entry name" value="Tagatose/fructose_Pkinase"/>
</dbReference>
<dbReference type="NCBIfam" id="TIGR03168">
    <property type="entry name" value="1-PFK"/>
    <property type="match status" value="1"/>
</dbReference>
<dbReference type="NCBIfam" id="TIGR01231">
    <property type="entry name" value="lacC"/>
    <property type="match status" value="1"/>
</dbReference>
<dbReference type="NCBIfam" id="NF010033">
    <property type="entry name" value="PRK13508.1"/>
    <property type="match status" value="1"/>
</dbReference>
<dbReference type="PANTHER" id="PTHR46566:SF5">
    <property type="entry name" value="1-PHOSPHOFRUCTOKINASE"/>
    <property type="match status" value="1"/>
</dbReference>
<dbReference type="PANTHER" id="PTHR46566">
    <property type="entry name" value="1-PHOSPHOFRUCTOKINASE-RELATED"/>
    <property type="match status" value="1"/>
</dbReference>
<dbReference type="Pfam" id="PF00294">
    <property type="entry name" value="PfkB"/>
    <property type="match status" value="1"/>
</dbReference>
<dbReference type="PIRSF" id="PIRSF000535">
    <property type="entry name" value="1PFK/6PFK/LacC"/>
    <property type="match status" value="1"/>
</dbReference>
<dbReference type="SUPFAM" id="SSF53613">
    <property type="entry name" value="Ribokinase-like"/>
    <property type="match status" value="1"/>
</dbReference>
<dbReference type="PROSITE" id="PS00583">
    <property type="entry name" value="PFKB_KINASES_1"/>
    <property type="match status" value="1"/>
</dbReference>
<dbReference type="PROSITE" id="PS00584">
    <property type="entry name" value="PFKB_KINASES_2"/>
    <property type="match status" value="1"/>
</dbReference>